<sequence>MTVLTQTTKHIESLLGQMKQIHRETFMQVDQQAFRQGMSNLGAAVNVITTDGVAGKSGFTASAVCSVTDTPPTLLVCLNRSASVFETFKQNQVLCVNTLAAHQAHLSNIFGGKTPMVDRFAHGEWRTLATQAPVLTDALVSFDCEVVQSLSVGSHDVFFCQVKAIQHCQGQNALMYFNRNYCEPHCVA</sequence>
<comment type="function">
    <text evidence="1">Catalyzes the reduction of FMN to FMNH2 which is used to reduce pyrimidine by RutA via the Rut pathway.</text>
</comment>
<comment type="catalytic activity">
    <reaction evidence="1">
        <text>FMNH2 + NAD(+) = FMN + NADH + 2 H(+)</text>
        <dbReference type="Rhea" id="RHEA:21620"/>
        <dbReference type="ChEBI" id="CHEBI:15378"/>
        <dbReference type="ChEBI" id="CHEBI:57540"/>
        <dbReference type="ChEBI" id="CHEBI:57618"/>
        <dbReference type="ChEBI" id="CHEBI:57945"/>
        <dbReference type="ChEBI" id="CHEBI:58210"/>
        <dbReference type="EC" id="1.5.1.42"/>
    </reaction>
</comment>
<comment type="similarity">
    <text evidence="1">Belongs to the non-flavoprotein flavin reductase family. RutF subfamily.</text>
</comment>
<protein>
    <recommendedName>
        <fullName evidence="1">FMN reductase (NADH) RutF</fullName>
        <ecNumber evidence="1">1.5.1.42</ecNumber>
    </recommendedName>
    <alternativeName>
        <fullName evidence="1">FMN reductase</fullName>
    </alternativeName>
    <alternativeName>
        <fullName evidence="1">NADH-flavin reductase RutF</fullName>
    </alternativeName>
    <alternativeName>
        <fullName evidence="1">NADH:flavin oxidoreductase</fullName>
    </alternativeName>
</protein>
<feature type="chain" id="PRO_0000402988" description="FMN reductase (NADH) RutF">
    <location>
        <begin position="1"/>
        <end position="188"/>
    </location>
</feature>
<proteinExistence type="inferred from homology"/>
<dbReference type="EC" id="1.5.1.42" evidence="1"/>
<dbReference type="EMBL" id="CR543861">
    <property type="protein sequence ID" value="CAG67013.1"/>
    <property type="molecule type" value="Genomic_DNA"/>
</dbReference>
<dbReference type="SMR" id="Q6FFZ4"/>
<dbReference type="STRING" id="202950.GCA_001485005_01778"/>
<dbReference type="KEGG" id="aci:ACIAD0030"/>
<dbReference type="eggNOG" id="COG1853">
    <property type="taxonomic scope" value="Bacteria"/>
</dbReference>
<dbReference type="HOGENOM" id="CLU_059021_2_2_6"/>
<dbReference type="OrthoDB" id="6401628at2"/>
<dbReference type="BioCyc" id="ASP62977:ACIAD_RS00160-MONOMER"/>
<dbReference type="Proteomes" id="UP000000430">
    <property type="component" value="Chromosome"/>
</dbReference>
<dbReference type="GO" id="GO:0010181">
    <property type="term" value="F:FMN binding"/>
    <property type="evidence" value="ECO:0007669"/>
    <property type="project" value="InterPro"/>
</dbReference>
<dbReference type="GO" id="GO:0052874">
    <property type="term" value="F:FMN reductase (NADH) activity"/>
    <property type="evidence" value="ECO:0007669"/>
    <property type="project" value="UniProtKB-EC"/>
</dbReference>
<dbReference type="GO" id="GO:0008752">
    <property type="term" value="F:FMN reductase [NAD(P)H] activity"/>
    <property type="evidence" value="ECO:0007669"/>
    <property type="project" value="InterPro"/>
</dbReference>
<dbReference type="GO" id="GO:0042602">
    <property type="term" value="F:riboflavin reductase (NADPH) activity"/>
    <property type="evidence" value="ECO:0007669"/>
    <property type="project" value="UniProtKB-UniRule"/>
</dbReference>
<dbReference type="GO" id="GO:0019740">
    <property type="term" value="P:nitrogen utilization"/>
    <property type="evidence" value="ECO:0007669"/>
    <property type="project" value="UniProtKB-UniRule"/>
</dbReference>
<dbReference type="GO" id="GO:0006212">
    <property type="term" value="P:uracil catabolic process"/>
    <property type="evidence" value="ECO:0007669"/>
    <property type="project" value="UniProtKB-UniRule"/>
</dbReference>
<dbReference type="Gene3D" id="2.30.110.10">
    <property type="entry name" value="Electron Transport, Fmn-binding Protein, Chain A"/>
    <property type="match status" value="1"/>
</dbReference>
<dbReference type="HAMAP" id="MF_00833">
    <property type="entry name" value="RutF"/>
    <property type="match status" value="1"/>
</dbReference>
<dbReference type="InterPro" id="IPR002563">
    <property type="entry name" value="Flavin_Rdtase-like_dom"/>
</dbReference>
<dbReference type="InterPro" id="IPR050268">
    <property type="entry name" value="NADH-dep_flavin_reductase"/>
</dbReference>
<dbReference type="InterPro" id="IPR019917">
    <property type="entry name" value="RutF"/>
</dbReference>
<dbReference type="InterPro" id="IPR012349">
    <property type="entry name" value="Split_barrel_FMN-bd"/>
</dbReference>
<dbReference type="NCBIfam" id="TIGR03615">
    <property type="entry name" value="RutF"/>
    <property type="match status" value="1"/>
</dbReference>
<dbReference type="PANTHER" id="PTHR30466">
    <property type="entry name" value="FLAVIN REDUCTASE"/>
    <property type="match status" value="1"/>
</dbReference>
<dbReference type="PANTHER" id="PTHR30466:SF1">
    <property type="entry name" value="FMN REDUCTASE (NADH) RUTF"/>
    <property type="match status" value="1"/>
</dbReference>
<dbReference type="Pfam" id="PF01613">
    <property type="entry name" value="Flavin_Reduct"/>
    <property type="match status" value="1"/>
</dbReference>
<dbReference type="SMART" id="SM00903">
    <property type="entry name" value="Flavin_Reduct"/>
    <property type="match status" value="1"/>
</dbReference>
<dbReference type="SUPFAM" id="SSF50475">
    <property type="entry name" value="FMN-binding split barrel"/>
    <property type="match status" value="1"/>
</dbReference>
<organism>
    <name type="scientific">Acinetobacter baylyi (strain ATCC 33305 / BD413 / ADP1)</name>
    <dbReference type="NCBI Taxonomy" id="62977"/>
    <lineage>
        <taxon>Bacteria</taxon>
        <taxon>Pseudomonadati</taxon>
        <taxon>Pseudomonadota</taxon>
        <taxon>Gammaproteobacteria</taxon>
        <taxon>Moraxellales</taxon>
        <taxon>Moraxellaceae</taxon>
        <taxon>Acinetobacter</taxon>
    </lineage>
</organism>
<reference key="1">
    <citation type="journal article" date="2004" name="Nucleic Acids Res.">
        <title>Unique features revealed by the genome sequence of Acinetobacter sp. ADP1, a versatile and naturally transformation competent bacterium.</title>
        <authorList>
            <person name="Barbe V."/>
            <person name="Vallenet D."/>
            <person name="Fonknechten N."/>
            <person name="Kreimeyer A."/>
            <person name="Oztas S."/>
            <person name="Labarre L."/>
            <person name="Cruveiller S."/>
            <person name="Robert C."/>
            <person name="Duprat S."/>
            <person name="Wincker P."/>
            <person name="Ornston L.N."/>
            <person name="Weissenbach J."/>
            <person name="Marliere P."/>
            <person name="Cohen G.N."/>
            <person name="Medigue C."/>
        </authorList>
    </citation>
    <scope>NUCLEOTIDE SEQUENCE [LARGE SCALE GENOMIC DNA]</scope>
    <source>
        <strain>ATCC 33305 / BD413 / ADP1</strain>
    </source>
</reference>
<gene>
    <name evidence="1" type="primary">rutF</name>
    <name type="ordered locus">ACIAD0030</name>
</gene>
<keyword id="KW-0285">Flavoprotein</keyword>
<keyword id="KW-0288">FMN</keyword>
<keyword id="KW-0520">NAD</keyword>
<keyword id="KW-0560">Oxidoreductase</keyword>
<accession>Q6FFZ4</accession>
<name>RUTF_ACIAD</name>
<evidence type="ECO:0000255" key="1">
    <source>
        <dbReference type="HAMAP-Rule" id="MF_00833"/>
    </source>
</evidence>